<feature type="chain" id="PRO_0000402979" description="Putative carbamate hydrolase RutD">
    <location>
        <begin position="1"/>
        <end position="259"/>
    </location>
</feature>
<dbReference type="EC" id="3.5.1.-" evidence="1"/>
<dbReference type="EMBL" id="CP000075">
    <property type="protein sequence ID" value="AAY36052.1"/>
    <property type="molecule type" value="Genomic_DNA"/>
</dbReference>
<dbReference type="RefSeq" id="WP_011266759.1">
    <property type="nucleotide sequence ID" value="NC_007005.1"/>
</dbReference>
<dbReference type="RefSeq" id="YP_234090.1">
    <property type="nucleotide sequence ID" value="NC_007005.1"/>
</dbReference>
<dbReference type="SMR" id="Q4ZXS0"/>
<dbReference type="STRING" id="205918.Psyr_0996"/>
<dbReference type="ESTHER" id="pseu2-q4zxs0">
    <property type="family name" value="RutD"/>
</dbReference>
<dbReference type="KEGG" id="psb:Psyr_0996"/>
<dbReference type="PATRIC" id="fig|205918.7.peg.1025"/>
<dbReference type="eggNOG" id="COG0596">
    <property type="taxonomic scope" value="Bacteria"/>
</dbReference>
<dbReference type="HOGENOM" id="CLU_020336_50_1_6"/>
<dbReference type="OrthoDB" id="9804723at2"/>
<dbReference type="Proteomes" id="UP000000426">
    <property type="component" value="Chromosome"/>
</dbReference>
<dbReference type="GO" id="GO:0016811">
    <property type="term" value="F:hydrolase activity, acting on carbon-nitrogen (but not peptide) bonds, in linear amides"/>
    <property type="evidence" value="ECO:0007669"/>
    <property type="project" value="InterPro"/>
</dbReference>
<dbReference type="GO" id="GO:0004806">
    <property type="term" value="F:triacylglycerol lipase activity"/>
    <property type="evidence" value="ECO:0007669"/>
    <property type="project" value="TreeGrafter"/>
</dbReference>
<dbReference type="GO" id="GO:0046503">
    <property type="term" value="P:glycerolipid catabolic process"/>
    <property type="evidence" value="ECO:0007669"/>
    <property type="project" value="TreeGrafter"/>
</dbReference>
<dbReference type="GO" id="GO:0019740">
    <property type="term" value="P:nitrogen utilization"/>
    <property type="evidence" value="ECO:0007669"/>
    <property type="project" value="UniProtKB-UniRule"/>
</dbReference>
<dbReference type="GO" id="GO:0006212">
    <property type="term" value="P:uracil catabolic process"/>
    <property type="evidence" value="ECO:0007669"/>
    <property type="project" value="UniProtKB-UniRule"/>
</dbReference>
<dbReference type="Gene3D" id="3.40.50.1820">
    <property type="entry name" value="alpha/beta hydrolase"/>
    <property type="match status" value="1"/>
</dbReference>
<dbReference type="HAMAP" id="MF_00832">
    <property type="entry name" value="RutD"/>
    <property type="match status" value="1"/>
</dbReference>
<dbReference type="InterPro" id="IPR050471">
    <property type="entry name" value="AB_hydrolase"/>
</dbReference>
<dbReference type="InterPro" id="IPR000073">
    <property type="entry name" value="AB_hydrolase_1"/>
</dbReference>
<dbReference type="InterPro" id="IPR029058">
    <property type="entry name" value="AB_hydrolase_fold"/>
</dbReference>
<dbReference type="InterPro" id="IPR019913">
    <property type="entry name" value="Pyrimidine_utilisation_RutD"/>
</dbReference>
<dbReference type="NCBIfam" id="TIGR03611">
    <property type="entry name" value="RutD"/>
    <property type="match status" value="1"/>
</dbReference>
<dbReference type="PANTHER" id="PTHR43433:SF5">
    <property type="entry name" value="AB HYDROLASE-1 DOMAIN-CONTAINING PROTEIN"/>
    <property type="match status" value="1"/>
</dbReference>
<dbReference type="PANTHER" id="PTHR43433">
    <property type="entry name" value="HYDROLASE, ALPHA/BETA FOLD FAMILY PROTEIN"/>
    <property type="match status" value="1"/>
</dbReference>
<dbReference type="Pfam" id="PF12697">
    <property type="entry name" value="Abhydrolase_6"/>
    <property type="match status" value="1"/>
</dbReference>
<dbReference type="PRINTS" id="PR00111">
    <property type="entry name" value="ABHYDROLASE"/>
</dbReference>
<dbReference type="SUPFAM" id="SSF53474">
    <property type="entry name" value="alpha/beta-Hydrolases"/>
    <property type="match status" value="1"/>
</dbReference>
<accession>Q4ZXS0</accession>
<protein>
    <recommendedName>
        <fullName evidence="1">Putative carbamate hydrolase RutD</fullName>
        <ecNumber evidence="1">3.5.1.-</ecNumber>
    </recommendedName>
    <alternativeName>
        <fullName evidence="1">Aminohydrolase</fullName>
    </alternativeName>
</protein>
<comment type="function">
    <text evidence="1">Involved in pyrimidine catabolism. May facilitate the hydrolysis of carbamate, a reaction that can also occur spontaneously.</text>
</comment>
<comment type="catalytic activity">
    <reaction evidence="1">
        <text>carbamate + 2 H(+) = NH4(+) + CO2</text>
        <dbReference type="Rhea" id="RHEA:15649"/>
        <dbReference type="ChEBI" id="CHEBI:13941"/>
        <dbReference type="ChEBI" id="CHEBI:15378"/>
        <dbReference type="ChEBI" id="CHEBI:16526"/>
        <dbReference type="ChEBI" id="CHEBI:28938"/>
    </reaction>
</comment>
<comment type="similarity">
    <text evidence="1">Belongs to the AB hydrolase superfamily. Hydrolase RutD family.</text>
</comment>
<organism>
    <name type="scientific">Pseudomonas syringae pv. syringae (strain B728a)</name>
    <dbReference type="NCBI Taxonomy" id="205918"/>
    <lineage>
        <taxon>Bacteria</taxon>
        <taxon>Pseudomonadati</taxon>
        <taxon>Pseudomonadota</taxon>
        <taxon>Gammaproteobacteria</taxon>
        <taxon>Pseudomonadales</taxon>
        <taxon>Pseudomonadaceae</taxon>
        <taxon>Pseudomonas</taxon>
        <taxon>Pseudomonas syringae</taxon>
    </lineage>
</organism>
<gene>
    <name evidence="1" type="primary">rutD</name>
    <name type="ordered locus">Psyr_0996</name>
</gene>
<keyword id="KW-0378">Hydrolase</keyword>
<evidence type="ECO:0000255" key="1">
    <source>
        <dbReference type="HAMAP-Rule" id="MF_00832"/>
    </source>
</evidence>
<reference key="1">
    <citation type="journal article" date="2005" name="Proc. Natl. Acad. Sci. U.S.A.">
        <title>Comparison of the complete genome sequences of Pseudomonas syringae pv. syringae B728a and pv. tomato DC3000.</title>
        <authorList>
            <person name="Feil H."/>
            <person name="Feil W.S."/>
            <person name="Chain P."/>
            <person name="Larimer F."/>
            <person name="Dibartolo G."/>
            <person name="Copeland A."/>
            <person name="Lykidis A."/>
            <person name="Trong S."/>
            <person name="Nolan M."/>
            <person name="Goltsman E."/>
            <person name="Thiel J."/>
            <person name="Malfatti S."/>
            <person name="Loper J.E."/>
            <person name="Lapidus A."/>
            <person name="Detter J.C."/>
            <person name="Land M."/>
            <person name="Richardson P.M."/>
            <person name="Kyrpides N.C."/>
            <person name="Ivanova N."/>
            <person name="Lindow S.E."/>
        </authorList>
    </citation>
    <scope>NUCLEOTIDE SEQUENCE [LARGE SCALE GENOMIC DNA]</scope>
    <source>
        <strain>B728a</strain>
    </source>
</reference>
<proteinExistence type="inferred from homology"/>
<sequence>MFHEFHACQHADAPTLVLSSGLGGSGRYWADDLTLLTRDYHVLVYDHAGTGRSPAVLPADYSIRHMAIELLALLDSLDIQRCHFMGHALGGLVGLELALLRPELLHSQVLINAWSSPNPHSARCFSVRKKLLLNSGPEAYVQAQALFLYPADWIAANGPRLADDEAHALAHFPDTDNLLRRIHALETFDVSAELSRIHTPTLLIANRDDMLVPWQQSRHLANALPNATLVLLEYGGHASNITDPLPFQRALRAFLSTQP</sequence>
<name>RUTD_PSEU2</name>